<dbReference type="EMBL" id="AY772475">
    <property type="protein sequence ID" value="AAW47246.1"/>
    <property type="molecule type" value="mRNA"/>
</dbReference>
<dbReference type="RefSeq" id="NP_001011681.2">
    <property type="nucleotide sequence ID" value="NM_001011681.3"/>
</dbReference>
<dbReference type="SMR" id="Q5ICW4"/>
<dbReference type="FunCoup" id="Q5ICW4">
    <property type="interactions" value="47"/>
</dbReference>
<dbReference type="IntAct" id="Q5ICW4">
    <property type="interactions" value="2"/>
</dbReference>
<dbReference type="MINT" id="Q5ICW4"/>
<dbReference type="STRING" id="9913.ENSBTAP00000025686"/>
<dbReference type="PaxDb" id="9913-ENSBTAP00000025686"/>
<dbReference type="GeneID" id="497029"/>
<dbReference type="KEGG" id="bta:497029"/>
<dbReference type="CTD" id="2888"/>
<dbReference type="eggNOG" id="KOG3751">
    <property type="taxonomic scope" value="Eukaryota"/>
</dbReference>
<dbReference type="InParanoid" id="Q5ICW4"/>
<dbReference type="OrthoDB" id="5990423at2759"/>
<dbReference type="Proteomes" id="UP000009136">
    <property type="component" value="Unplaced"/>
</dbReference>
<dbReference type="GO" id="GO:0005737">
    <property type="term" value="C:cytoplasm"/>
    <property type="evidence" value="ECO:0000318"/>
    <property type="project" value="GO_Central"/>
</dbReference>
<dbReference type="GO" id="GO:0010008">
    <property type="term" value="C:endosome membrane"/>
    <property type="evidence" value="ECO:0007669"/>
    <property type="project" value="UniProtKB-SubCell"/>
</dbReference>
<dbReference type="GO" id="GO:0005886">
    <property type="term" value="C:plasma membrane"/>
    <property type="evidence" value="ECO:0000318"/>
    <property type="project" value="GO_Central"/>
</dbReference>
<dbReference type="GO" id="GO:0008286">
    <property type="term" value="P:insulin receptor signaling pathway"/>
    <property type="evidence" value="ECO:0000318"/>
    <property type="project" value="GO_Central"/>
</dbReference>
<dbReference type="GO" id="GO:0046627">
    <property type="term" value="P:negative regulation of insulin receptor signaling pathway"/>
    <property type="evidence" value="ECO:0000318"/>
    <property type="project" value="GO_Central"/>
</dbReference>
<dbReference type="CDD" id="cd01259">
    <property type="entry name" value="PH_APBB1IP"/>
    <property type="match status" value="1"/>
</dbReference>
<dbReference type="CDD" id="cd16139">
    <property type="entry name" value="RA_GRB14"/>
    <property type="match status" value="1"/>
</dbReference>
<dbReference type="CDD" id="cd10414">
    <property type="entry name" value="SH2_Grb14"/>
    <property type="match status" value="1"/>
</dbReference>
<dbReference type="FunFam" id="3.30.505.10:FF:000015">
    <property type="entry name" value="Growth factor receptor-bound protein 10 isoform X1"/>
    <property type="match status" value="1"/>
</dbReference>
<dbReference type="FunFam" id="2.30.29.30:FF:000714">
    <property type="entry name" value="Growth factor receptor-bound protein 14"/>
    <property type="match status" value="1"/>
</dbReference>
<dbReference type="FunFam" id="3.10.20.90:FF:000133">
    <property type="entry name" value="growth factor receptor-bound protein 14 isoform X2"/>
    <property type="match status" value="1"/>
</dbReference>
<dbReference type="Gene3D" id="3.10.20.90">
    <property type="entry name" value="Phosphatidylinositol 3-kinase Catalytic Subunit, Chain A, domain 1"/>
    <property type="match status" value="1"/>
</dbReference>
<dbReference type="Gene3D" id="2.30.29.30">
    <property type="entry name" value="Pleckstrin-homology domain (PH domain)/Phosphotyrosine-binding domain (PTB)"/>
    <property type="match status" value="1"/>
</dbReference>
<dbReference type="Gene3D" id="3.30.505.10">
    <property type="entry name" value="SH2 domain"/>
    <property type="match status" value="1"/>
</dbReference>
<dbReference type="InterPro" id="IPR015042">
    <property type="entry name" value="BPS-dom"/>
</dbReference>
<dbReference type="InterPro" id="IPR039664">
    <property type="entry name" value="GRB/APBB1IP"/>
</dbReference>
<dbReference type="InterPro" id="IPR035034">
    <property type="entry name" value="Grb14_SH2"/>
</dbReference>
<dbReference type="InterPro" id="IPR011993">
    <property type="entry name" value="PH-like_dom_sf"/>
</dbReference>
<dbReference type="InterPro" id="IPR039665">
    <property type="entry name" value="PH_APBB1IP"/>
</dbReference>
<dbReference type="InterPro" id="IPR001849">
    <property type="entry name" value="PH_domain"/>
</dbReference>
<dbReference type="InterPro" id="IPR000159">
    <property type="entry name" value="RA_dom"/>
</dbReference>
<dbReference type="InterPro" id="IPR000980">
    <property type="entry name" value="SH2"/>
</dbReference>
<dbReference type="InterPro" id="IPR036860">
    <property type="entry name" value="SH2_dom_sf"/>
</dbReference>
<dbReference type="InterPro" id="IPR029071">
    <property type="entry name" value="Ubiquitin-like_domsf"/>
</dbReference>
<dbReference type="PANTHER" id="PTHR11243">
    <property type="entry name" value="GROWTH FACTOR RECEPTOR-BOUND PROTEIN"/>
    <property type="match status" value="1"/>
</dbReference>
<dbReference type="PANTHER" id="PTHR11243:SF22">
    <property type="entry name" value="GROWTH FACTOR RECEPTOR-BOUND PROTEIN 14"/>
    <property type="match status" value="1"/>
</dbReference>
<dbReference type="Pfam" id="PF08947">
    <property type="entry name" value="BPS"/>
    <property type="match status" value="1"/>
</dbReference>
<dbReference type="Pfam" id="PF00169">
    <property type="entry name" value="PH"/>
    <property type="match status" value="1"/>
</dbReference>
<dbReference type="Pfam" id="PF21989">
    <property type="entry name" value="RA_2"/>
    <property type="match status" value="1"/>
</dbReference>
<dbReference type="Pfam" id="PF00017">
    <property type="entry name" value="SH2"/>
    <property type="match status" value="1"/>
</dbReference>
<dbReference type="PRINTS" id="PR00401">
    <property type="entry name" value="SH2DOMAIN"/>
</dbReference>
<dbReference type="SMART" id="SM00233">
    <property type="entry name" value="PH"/>
    <property type="match status" value="1"/>
</dbReference>
<dbReference type="SMART" id="SM00314">
    <property type="entry name" value="RA"/>
    <property type="match status" value="1"/>
</dbReference>
<dbReference type="SMART" id="SM00252">
    <property type="entry name" value="SH2"/>
    <property type="match status" value="1"/>
</dbReference>
<dbReference type="SUPFAM" id="SSF50729">
    <property type="entry name" value="PH domain-like"/>
    <property type="match status" value="1"/>
</dbReference>
<dbReference type="SUPFAM" id="SSF55550">
    <property type="entry name" value="SH2 domain"/>
    <property type="match status" value="1"/>
</dbReference>
<dbReference type="SUPFAM" id="SSF54236">
    <property type="entry name" value="Ubiquitin-like"/>
    <property type="match status" value="1"/>
</dbReference>
<dbReference type="PROSITE" id="PS50003">
    <property type="entry name" value="PH_DOMAIN"/>
    <property type="match status" value="1"/>
</dbReference>
<dbReference type="PROSITE" id="PS50200">
    <property type="entry name" value="RA"/>
    <property type="match status" value="1"/>
</dbReference>
<dbReference type="PROSITE" id="PS50001">
    <property type="entry name" value="SH2"/>
    <property type="match status" value="1"/>
</dbReference>
<gene>
    <name type="primary">GRB14</name>
</gene>
<feature type="initiator methionine" description="Removed" evidence="3">
    <location>
        <position position="1"/>
    </location>
</feature>
<feature type="chain" id="PRO_0000253502" description="Growth factor receptor-bound protein 14">
    <location>
        <begin position="2"/>
        <end position="540"/>
    </location>
</feature>
<feature type="domain" description="Ras-associating" evidence="6">
    <location>
        <begin position="106"/>
        <end position="192"/>
    </location>
</feature>
<feature type="domain" description="PH" evidence="5">
    <location>
        <begin position="234"/>
        <end position="342"/>
    </location>
</feature>
<feature type="domain" description="SH2" evidence="7">
    <location>
        <begin position="439"/>
        <end position="535"/>
    </location>
</feature>
<feature type="region of interest" description="Disordered" evidence="8">
    <location>
        <begin position="1"/>
        <end position="23"/>
    </location>
</feature>
<feature type="modified residue" description="N-acetylthreonine" evidence="3">
    <location>
        <position position="2"/>
    </location>
</feature>
<feature type="modified residue" description="Phosphoserine" evidence="2">
    <location>
        <position position="372"/>
    </location>
</feature>
<feature type="modified residue" description="Phosphoserine" evidence="4">
    <location>
        <position position="375"/>
    </location>
</feature>
<reference key="1">
    <citation type="submission" date="2004-10" db="EMBL/GenBank/DDBJ databases">
        <title>Retinal GRB14 in insulin receptor signaling.</title>
        <authorList>
            <person name="Rajala R.V.S."/>
        </authorList>
    </citation>
    <scope>NUCLEOTIDE SEQUENCE [MRNA]</scope>
    <source>
        <tissue>Retina</tissue>
    </source>
</reference>
<comment type="function">
    <text evidence="1">Adapter protein which modulates coupling of cell surface receptor kinases with specific signaling pathways. Binds to, and suppresses signals from, the activated insulin receptor (INSR). Potent inhibitor of insulin-stimulated MAPK3 phosphorylation. Plays a critical role regulating PDPK1 membrane translocation in response to insulin stimulation and serves as an adapter protein to recruit PDPK1 to activated insulin receptor, thus promoting PKB/AKT1 phosphorylation and transduction of the insulin signal (By similarity).</text>
</comment>
<comment type="subunit">
    <text evidence="1">Interacts with the cytoplasmic domain of the autophosphorylated insulin receptor, through the SH2 domain. Interacts with GRB14 (via BPS domain); this interaction protects the tyrosines in the activation loop on INSR from dephosphorylation (By similarity). Binds to the ankyrin repeat region of TNKS2 via its N-terminus. Interacts with activated NRAS. Interacts (via SH2 domain) with TEK/TIE2 (tyrosine phosphorylated) (By similarity).</text>
</comment>
<comment type="interaction">
    <interactant intactId="EBI-7639273">
        <id>Q5ICW4</id>
    </interactant>
    <interactant intactId="EBI-8417095">
        <id>P29973</id>
        <label>CNGA1</label>
    </interactant>
    <organismsDiffer>true</organismsDiffer>
    <experiments>4</experiments>
</comment>
<comment type="interaction">
    <interactant intactId="EBI-7639273">
        <id>Q5ICW4</id>
    </interactant>
    <interactant intactId="EBI-7959609">
        <id>Q14028</id>
        <label>CNGB1</label>
    </interactant>
    <organismsDiffer>true</organismsDiffer>
    <experiments>2</experiments>
</comment>
<comment type="subcellular location">
    <subcellularLocation>
        <location evidence="3">Cytoplasm</location>
    </subcellularLocation>
    <subcellularLocation>
        <location evidence="3">Endosome membrane</location>
        <topology evidence="3">Peripheral membrane protein</topology>
    </subcellularLocation>
    <text evidence="3">Upon insulin stimulation, translocates to the plasma membrane.</text>
</comment>
<comment type="domain">
    <text evidence="1">The PH domain binds relatively non-specifically and with low affinity to several phosphoinositides, the best binder being PI(3,4,5)P3.</text>
</comment>
<comment type="PTM">
    <text evidence="1">Phosphorylated on serine residues. Phosphorylated on tyrosine residues by TEK/TIE2 (By similarity).</text>
</comment>
<comment type="similarity">
    <text evidence="9">Belongs to the GRB7/10/14 family.</text>
</comment>
<keyword id="KW-0007">Acetylation</keyword>
<keyword id="KW-0963">Cytoplasm</keyword>
<keyword id="KW-0967">Endosome</keyword>
<keyword id="KW-0472">Membrane</keyword>
<keyword id="KW-0597">Phosphoprotein</keyword>
<keyword id="KW-1185">Reference proteome</keyword>
<keyword id="KW-0727">SH2 domain</keyword>
<name>GRB14_BOVIN</name>
<evidence type="ECO:0000250" key="1"/>
<evidence type="ECO:0000250" key="2">
    <source>
        <dbReference type="UniProtKB" id="O88900"/>
    </source>
</evidence>
<evidence type="ECO:0000250" key="3">
    <source>
        <dbReference type="UniProtKB" id="Q14449"/>
    </source>
</evidence>
<evidence type="ECO:0000250" key="4">
    <source>
        <dbReference type="UniProtKB" id="Q9JLM9"/>
    </source>
</evidence>
<evidence type="ECO:0000255" key="5">
    <source>
        <dbReference type="PROSITE-ProRule" id="PRU00145"/>
    </source>
</evidence>
<evidence type="ECO:0000255" key="6">
    <source>
        <dbReference type="PROSITE-ProRule" id="PRU00166"/>
    </source>
</evidence>
<evidence type="ECO:0000255" key="7">
    <source>
        <dbReference type="PROSITE-ProRule" id="PRU00191"/>
    </source>
</evidence>
<evidence type="ECO:0000256" key="8">
    <source>
        <dbReference type="SAM" id="MobiDB-lite"/>
    </source>
</evidence>
<evidence type="ECO:0000305" key="9"/>
<proteinExistence type="evidence at protein level"/>
<accession>Q5ICW4</accession>
<protein>
    <recommendedName>
        <fullName>Growth factor receptor-bound protein 14</fullName>
    </recommendedName>
    <alternativeName>
        <fullName>GRB14 adapter protein</fullName>
    </alternativeName>
</protein>
<sequence length="540" mass="61040">MTTSLQDGQSAAGRAAARDSPLAAQVCGAAQGRGDARDLAPAPWLHARALLPPPDATRGCAADRRKKKDLDVLEMPSIPNPFPELCCSPFTSVLSAGLFPKANSRKKQVIKVYSEDETSRALEVPSDITARDVCQLLILKNHYIDDHSWTLFEHLPHVGLERTIEDHELVIEVLSNWGMEEENKLYFRKNYAKYEFFKNPMYFFPEHMVSFATETNGEISPTQILQMFLSSSTYPEIHGFLHAKEQGKKSWKKIYFLLRRSGLYFSTKGTSKEPRHLQFFSEFGNSDIYVSLAGKKKHGAPTNYGFCFKPNKAGGPRDLKMLCAEEEQSRTCWVTAIRLLKYGMQLYQNYMHPYQGRSGYSSQSISPMRSISENSRVAMDFSGQKTRVIENPTEALSVAVEEGLAWRKKGCLRLGSHGSPTASSQSSATSMAIHRSQPWFHHKMSREEAQRLIIQQGLVDGVFLVRDSQSNPKTFVLSMSHGQKIKHFQIIPVEDDGEMFHTLDDGHTRFTDLIQLVEFYQLNKGVLPCKLKHYCARIAL</sequence>
<organism>
    <name type="scientific">Bos taurus</name>
    <name type="common">Bovine</name>
    <dbReference type="NCBI Taxonomy" id="9913"/>
    <lineage>
        <taxon>Eukaryota</taxon>
        <taxon>Metazoa</taxon>
        <taxon>Chordata</taxon>
        <taxon>Craniata</taxon>
        <taxon>Vertebrata</taxon>
        <taxon>Euteleostomi</taxon>
        <taxon>Mammalia</taxon>
        <taxon>Eutheria</taxon>
        <taxon>Laurasiatheria</taxon>
        <taxon>Artiodactyla</taxon>
        <taxon>Ruminantia</taxon>
        <taxon>Pecora</taxon>
        <taxon>Bovidae</taxon>
        <taxon>Bovinae</taxon>
        <taxon>Bos</taxon>
    </lineage>
</organism>